<reference key="1">
    <citation type="submission" date="1998-04" db="EMBL/GenBank/DDBJ databases">
        <title>Chromobacterium violaceum genomic fragment containing orfD (soxR/merR homolog).</title>
        <authorList>
            <person name="Kolibachuk D.J."/>
            <person name="Dennis D.E."/>
        </authorList>
    </citation>
    <scope>NUCLEOTIDE SEQUENCE [GENOMIC DNA]</scope>
</reference>
<reference key="2">
    <citation type="journal article" date="2003" name="Proc. Natl. Acad. Sci. U.S.A.">
        <title>The complete genome sequence of Chromobacterium violaceum reveals remarkable and exploitable bacterial adaptability.</title>
        <authorList>
            <person name="Vasconcelos A.T.R."/>
            <person name="de Almeida D.F."/>
            <person name="Hungria M."/>
            <person name="Guimaraes C.T."/>
            <person name="Antonio R.V."/>
            <person name="Almeida F.C."/>
            <person name="de Almeida L.G.P."/>
            <person name="de Almeida R."/>
            <person name="Alves-Gomes J.A."/>
            <person name="Andrade E.M."/>
            <person name="Araripe J."/>
            <person name="de Araujo M.F.F."/>
            <person name="Astolfi-Filho S."/>
            <person name="Azevedo V."/>
            <person name="Baptista A.J."/>
            <person name="Bataus L.A.M."/>
            <person name="Batista J.S."/>
            <person name="Belo A."/>
            <person name="van den Berg C."/>
            <person name="Bogo M."/>
            <person name="Bonatto S."/>
            <person name="Bordignon J."/>
            <person name="Brigido M.M."/>
            <person name="Brito C.A."/>
            <person name="Brocchi M."/>
            <person name="Burity H.A."/>
            <person name="Camargo A.A."/>
            <person name="Cardoso D.D.P."/>
            <person name="Carneiro N.P."/>
            <person name="Carraro D.M."/>
            <person name="Carvalho C.M.B."/>
            <person name="Cascardo J.C.M."/>
            <person name="Cavada B.S."/>
            <person name="Chueire L.M.O."/>
            <person name="Creczynski-Pasa T.B."/>
            <person name="Cunha-Junior N.C."/>
            <person name="Fagundes N."/>
            <person name="Falcao C.L."/>
            <person name="Fantinatti F."/>
            <person name="Farias I.P."/>
            <person name="Felipe M.S.S."/>
            <person name="Ferrari L.P."/>
            <person name="Ferro J.A."/>
            <person name="Ferro M.I.T."/>
            <person name="Franco G.R."/>
            <person name="Freitas N.S.A."/>
            <person name="Furlan L.R."/>
            <person name="Gazzinelli R.T."/>
            <person name="Gomes E.A."/>
            <person name="Goncalves P.R."/>
            <person name="Grangeiro T.B."/>
            <person name="Grattapaglia D."/>
            <person name="Grisard E.C."/>
            <person name="Hanna E.S."/>
            <person name="Jardim S.N."/>
            <person name="Laurino J."/>
            <person name="Leoi L.C.T."/>
            <person name="Lima L.F.A."/>
            <person name="Loureiro M.F."/>
            <person name="Lyra M.C.C.P."/>
            <person name="Madeira H.M.F."/>
            <person name="Manfio G.P."/>
            <person name="Maranhao A.Q."/>
            <person name="Martins W.S."/>
            <person name="di Mauro S.M.Z."/>
            <person name="de Medeiros S.R.B."/>
            <person name="Meissner R.V."/>
            <person name="Moreira M.A.M."/>
            <person name="Nascimento F.F."/>
            <person name="Nicolas M.F."/>
            <person name="Oliveira J.G."/>
            <person name="Oliveira S.C."/>
            <person name="Paixao R.F.C."/>
            <person name="Parente J.A."/>
            <person name="Pedrosa F.O."/>
            <person name="Pena S.D.J."/>
            <person name="Pereira J.O."/>
            <person name="Pereira M."/>
            <person name="Pinto L.S.R.C."/>
            <person name="Pinto L.S."/>
            <person name="Porto J.I.R."/>
            <person name="Potrich D.P."/>
            <person name="Ramalho-Neto C.E."/>
            <person name="Reis A.M.M."/>
            <person name="Rigo L.U."/>
            <person name="Rondinelli E."/>
            <person name="Santos E.B.P."/>
            <person name="Santos F.R."/>
            <person name="Schneider M.P.C."/>
            <person name="Seuanez H.N."/>
            <person name="Silva A.M.R."/>
            <person name="da Silva A.L.C."/>
            <person name="Silva D.W."/>
            <person name="Silva R."/>
            <person name="Simoes I.C."/>
            <person name="Simon D."/>
            <person name="Soares C.M.A."/>
            <person name="Soares R.B.A."/>
            <person name="Souza E.M."/>
            <person name="Souza K.R.L."/>
            <person name="Souza R.C."/>
            <person name="Steffens M.B.R."/>
            <person name="Steindel M."/>
            <person name="Teixeira S.R."/>
            <person name="Urmenyi T."/>
            <person name="Vettore A."/>
            <person name="Wassem R."/>
            <person name="Zaha A."/>
            <person name="Simpson A.J.G."/>
        </authorList>
    </citation>
    <scope>NUCLEOTIDE SEQUENCE [LARGE SCALE GENOMIC DNA]</scope>
    <source>
        <strain>ATCC 12472 / DSM 30191 / JCM 1249 / CCUG 213 / NBRC 12614 / NCIMB 9131 / NCTC 9757 / MK</strain>
    </source>
</reference>
<proteinExistence type="predicted"/>
<accession>Q9ZHI4</accession>
<keyword id="KW-0001">2Fe-2S</keyword>
<keyword id="KW-0238">DNA-binding</keyword>
<keyword id="KW-0408">Iron</keyword>
<keyword id="KW-0411">Iron-sulfur</keyword>
<keyword id="KW-0479">Metal-binding</keyword>
<keyword id="KW-1185">Reference proteome</keyword>
<keyword id="KW-0804">Transcription</keyword>
<keyword id="KW-0805">Transcription regulation</keyword>
<dbReference type="EMBL" id="AF061445">
    <property type="protein sequence ID" value="AAC69613.1"/>
    <property type="molecule type" value="Genomic_DNA"/>
</dbReference>
<dbReference type="EMBL" id="AE016825">
    <property type="protein sequence ID" value="AAQ60461.1"/>
    <property type="molecule type" value="Genomic_DNA"/>
</dbReference>
<dbReference type="RefSeq" id="WP_011136340.1">
    <property type="nucleotide sequence ID" value="NC_005085.1"/>
</dbReference>
<dbReference type="SMR" id="Q9ZHI4"/>
<dbReference type="STRING" id="243365.CV_2793"/>
<dbReference type="GeneID" id="66368491"/>
<dbReference type="KEGG" id="cvi:CV_2793"/>
<dbReference type="eggNOG" id="COG0789">
    <property type="taxonomic scope" value="Bacteria"/>
</dbReference>
<dbReference type="HOGENOM" id="CLU_060077_5_1_4"/>
<dbReference type="OrthoDB" id="9802944at2"/>
<dbReference type="Proteomes" id="UP000001424">
    <property type="component" value="Chromosome"/>
</dbReference>
<dbReference type="GO" id="GO:0051537">
    <property type="term" value="F:2 iron, 2 sulfur cluster binding"/>
    <property type="evidence" value="ECO:0007669"/>
    <property type="project" value="UniProtKB-KW"/>
</dbReference>
<dbReference type="GO" id="GO:0003677">
    <property type="term" value="F:DNA binding"/>
    <property type="evidence" value="ECO:0007669"/>
    <property type="project" value="UniProtKB-KW"/>
</dbReference>
<dbReference type="GO" id="GO:0003700">
    <property type="term" value="F:DNA-binding transcription factor activity"/>
    <property type="evidence" value="ECO:0007669"/>
    <property type="project" value="InterPro"/>
</dbReference>
<dbReference type="GO" id="GO:0046872">
    <property type="term" value="F:metal ion binding"/>
    <property type="evidence" value="ECO:0007669"/>
    <property type="project" value="UniProtKB-KW"/>
</dbReference>
<dbReference type="GO" id="GO:0006979">
    <property type="term" value="P:response to oxidative stress"/>
    <property type="evidence" value="ECO:0007669"/>
    <property type="project" value="InterPro"/>
</dbReference>
<dbReference type="CDD" id="cd01110">
    <property type="entry name" value="HTH_SoxR"/>
    <property type="match status" value="1"/>
</dbReference>
<dbReference type="Gene3D" id="1.10.1660.10">
    <property type="match status" value="1"/>
</dbReference>
<dbReference type="InterPro" id="IPR009061">
    <property type="entry name" value="DNA-bd_dom_put_sf"/>
</dbReference>
<dbReference type="InterPro" id="IPR000551">
    <property type="entry name" value="MerR-type_HTH_dom"/>
</dbReference>
<dbReference type="InterPro" id="IPR047057">
    <property type="entry name" value="MerR_fam"/>
</dbReference>
<dbReference type="InterPro" id="IPR010211">
    <property type="entry name" value="Redox-sen_tscrpt-act_SoxR"/>
</dbReference>
<dbReference type="InterPro" id="IPR015358">
    <property type="entry name" value="Tscrpt_reg_MerR_DNA-bd"/>
</dbReference>
<dbReference type="NCBIfam" id="TIGR01950">
    <property type="entry name" value="SoxR"/>
    <property type="match status" value="1"/>
</dbReference>
<dbReference type="PANTHER" id="PTHR30204">
    <property type="entry name" value="REDOX-CYCLING DRUG-SENSING TRANSCRIPTIONAL ACTIVATOR SOXR"/>
    <property type="match status" value="1"/>
</dbReference>
<dbReference type="PANTHER" id="PTHR30204:SF0">
    <property type="entry name" value="REDOX-SENSITIVE TRANSCRIPTIONAL ACTIVATOR SOXR"/>
    <property type="match status" value="1"/>
</dbReference>
<dbReference type="Pfam" id="PF00376">
    <property type="entry name" value="MerR"/>
    <property type="match status" value="1"/>
</dbReference>
<dbReference type="Pfam" id="PF09278">
    <property type="entry name" value="MerR-DNA-bind"/>
    <property type="match status" value="1"/>
</dbReference>
<dbReference type="PRINTS" id="PR00040">
    <property type="entry name" value="HTHMERR"/>
</dbReference>
<dbReference type="SMART" id="SM00422">
    <property type="entry name" value="HTH_MERR"/>
    <property type="match status" value="1"/>
</dbReference>
<dbReference type="SUPFAM" id="SSF46955">
    <property type="entry name" value="Putative DNA-binding domain"/>
    <property type="match status" value="1"/>
</dbReference>
<dbReference type="PROSITE" id="PS00552">
    <property type="entry name" value="HTH_MERR_1"/>
    <property type="match status" value="1"/>
</dbReference>
<dbReference type="PROSITE" id="PS50937">
    <property type="entry name" value="HTH_MERR_2"/>
    <property type="match status" value="1"/>
</dbReference>
<gene>
    <name type="primary">soxR</name>
    <name type="ordered locus">CV_2793</name>
</gene>
<sequence>MEESTITIGRLAKRTGVAASALRFYEARGLIHSVGEAGKTRRYRRDAIRRVSFIRVAQAMGMSLQDIGAALADLPSQRTPTADDWARISQAWKPLLQERIDALCRLRDQLDSCIGCGCLSLERCKLYNPDDKAGEQGCGPRFLLDEKA</sequence>
<name>SOXR_CHRVO</name>
<evidence type="ECO:0000250" key="1"/>
<evidence type="ECO:0000255" key="2">
    <source>
        <dbReference type="PROSITE-ProRule" id="PRU00254"/>
    </source>
</evidence>
<evidence type="ECO:0000305" key="3"/>
<feature type="chain" id="PRO_0000098156" description="HTH-type transcriptional activator SoxR homolog">
    <location>
        <begin position="1"/>
        <end position="148"/>
    </location>
</feature>
<feature type="domain" description="HTH merR-type" evidence="2">
    <location>
        <begin position="5"/>
        <end position="73"/>
    </location>
</feature>
<feature type="DNA-binding region" description="H-T-H motif" evidence="2">
    <location>
        <begin position="8"/>
        <end position="34"/>
    </location>
</feature>
<feature type="binding site" evidence="1">
    <location>
        <position position="113"/>
    </location>
    <ligand>
        <name>[2Fe-2S] cluster</name>
        <dbReference type="ChEBI" id="CHEBI:190135"/>
    </ligand>
</feature>
<feature type="binding site" evidence="1">
    <location>
        <position position="116"/>
    </location>
    <ligand>
        <name>[2Fe-2S] cluster</name>
        <dbReference type="ChEBI" id="CHEBI:190135"/>
    </ligand>
</feature>
<feature type="binding site" evidence="1">
    <location>
        <position position="118"/>
    </location>
    <ligand>
        <name>[2Fe-2S] cluster</name>
        <dbReference type="ChEBI" id="CHEBI:190135"/>
    </ligand>
</feature>
<feature type="binding site" evidence="1">
    <location>
        <position position="124"/>
    </location>
    <ligand>
        <name>[2Fe-2S] cluster</name>
        <dbReference type="ChEBI" id="CHEBI:190135"/>
    </ligand>
</feature>
<feature type="sequence conflict" description="In Ref. 1; AAC69613." evidence="3" ref="1">
    <original>D</original>
    <variation>E</variation>
    <location>
        <position position="101"/>
    </location>
</feature>
<organism>
    <name type="scientific">Chromobacterium violaceum (strain ATCC 12472 / DSM 30191 / JCM 1249 / CCUG 213 / NBRC 12614 / NCIMB 9131 / NCTC 9757 / MK)</name>
    <dbReference type="NCBI Taxonomy" id="243365"/>
    <lineage>
        <taxon>Bacteria</taxon>
        <taxon>Pseudomonadati</taxon>
        <taxon>Pseudomonadota</taxon>
        <taxon>Betaproteobacteria</taxon>
        <taxon>Neisseriales</taxon>
        <taxon>Chromobacteriaceae</taxon>
        <taxon>Chromobacterium</taxon>
    </lineage>
</organism>
<protein>
    <recommendedName>
        <fullName>HTH-type transcriptional activator SoxR homolog</fullName>
    </recommendedName>
</protein>